<name>SYE2_RUEPO</name>
<feature type="chain" id="PRO_0000119650" description="Glutamate--tRNA ligase 2">
    <location>
        <begin position="1"/>
        <end position="468"/>
    </location>
</feature>
<feature type="short sequence motif" description="'HIGH' region" evidence="1">
    <location>
        <begin position="11"/>
        <end position="21"/>
    </location>
</feature>
<feature type="short sequence motif" description="'KMSKS' region" evidence="1">
    <location>
        <begin position="239"/>
        <end position="243"/>
    </location>
</feature>
<feature type="binding site" evidence="1">
    <location>
        <position position="242"/>
    </location>
    <ligand>
        <name>ATP</name>
        <dbReference type="ChEBI" id="CHEBI:30616"/>
    </ligand>
</feature>
<sequence>MPDQVVTRFAPSPTGFLHIGGARTALFNWLYARGRGGKFLLRIEDTDRARSTPEATAAILQGMAWLGLDHDGEVISQFERAPRHAEVALELLAQGKAYKCFSTQDEIQAFREAAQAEKRSTLFRSPWRDADPATHPDAPYVIRIKAPQSGETVIRDQVQGDVTIRNDQLDDMVLLRSDGTPVYMLAVVVDDHDMGVTHVIRGDDHLNNAARQMMIYQAMGWEVPVWAHIPLIHGPDGKKLSKRHGALGAQEYQAMGYPAAGMRNYLARLGWSHGDDEFFTDAQAREWFDLDGIGKSPARFDLKKLENLSGQHIAVSDDAALRHEIEAYLAAAGLPALTQTQSGDLERAMYCLKDRARTFPELIEKAAFVLASRPISPDEKAAAALASVSDGILAELTPQLQNASWTRESLEEALNAFAEAHGTKFGKLAAPLRAALAGRAVTPSVFDMMLVLGRDESLARLRDAAHPA</sequence>
<proteinExistence type="inferred from homology"/>
<keyword id="KW-0030">Aminoacyl-tRNA synthetase</keyword>
<keyword id="KW-0067">ATP-binding</keyword>
<keyword id="KW-0963">Cytoplasm</keyword>
<keyword id="KW-0436">Ligase</keyword>
<keyword id="KW-0547">Nucleotide-binding</keyword>
<keyword id="KW-0648">Protein biosynthesis</keyword>
<keyword id="KW-1185">Reference proteome</keyword>
<evidence type="ECO:0000255" key="1">
    <source>
        <dbReference type="HAMAP-Rule" id="MF_00022"/>
    </source>
</evidence>
<dbReference type="EC" id="6.1.1.17" evidence="1"/>
<dbReference type="EMBL" id="CP000031">
    <property type="protein sequence ID" value="AAV95424.1"/>
    <property type="molecule type" value="Genomic_DNA"/>
</dbReference>
<dbReference type="RefSeq" id="WP_011047879.1">
    <property type="nucleotide sequence ID" value="NC_003911.12"/>
</dbReference>
<dbReference type="SMR" id="Q5LRH2"/>
<dbReference type="STRING" id="246200.SPO2156"/>
<dbReference type="PaxDb" id="246200-SPO2156"/>
<dbReference type="KEGG" id="sil:SPO2156"/>
<dbReference type="eggNOG" id="COG0008">
    <property type="taxonomic scope" value="Bacteria"/>
</dbReference>
<dbReference type="HOGENOM" id="CLU_015768_6_0_5"/>
<dbReference type="OrthoDB" id="9807503at2"/>
<dbReference type="Proteomes" id="UP000001023">
    <property type="component" value="Chromosome"/>
</dbReference>
<dbReference type="GO" id="GO:0005829">
    <property type="term" value="C:cytosol"/>
    <property type="evidence" value="ECO:0007669"/>
    <property type="project" value="TreeGrafter"/>
</dbReference>
<dbReference type="GO" id="GO:0005524">
    <property type="term" value="F:ATP binding"/>
    <property type="evidence" value="ECO:0007669"/>
    <property type="project" value="UniProtKB-UniRule"/>
</dbReference>
<dbReference type="GO" id="GO:0004818">
    <property type="term" value="F:glutamate-tRNA ligase activity"/>
    <property type="evidence" value="ECO:0007669"/>
    <property type="project" value="UniProtKB-UniRule"/>
</dbReference>
<dbReference type="GO" id="GO:0000049">
    <property type="term" value="F:tRNA binding"/>
    <property type="evidence" value="ECO:0007669"/>
    <property type="project" value="InterPro"/>
</dbReference>
<dbReference type="GO" id="GO:0008270">
    <property type="term" value="F:zinc ion binding"/>
    <property type="evidence" value="ECO:0007669"/>
    <property type="project" value="InterPro"/>
</dbReference>
<dbReference type="GO" id="GO:0006424">
    <property type="term" value="P:glutamyl-tRNA aminoacylation"/>
    <property type="evidence" value="ECO:0007669"/>
    <property type="project" value="UniProtKB-UniRule"/>
</dbReference>
<dbReference type="CDD" id="cd00808">
    <property type="entry name" value="GluRS_core"/>
    <property type="match status" value="1"/>
</dbReference>
<dbReference type="FunFam" id="3.40.50.620:FF:000007">
    <property type="entry name" value="Glutamate--tRNA ligase"/>
    <property type="match status" value="1"/>
</dbReference>
<dbReference type="Gene3D" id="1.10.10.350">
    <property type="match status" value="1"/>
</dbReference>
<dbReference type="Gene3D" id="3.40.50.620">
    <property type="entry name" value="HUPs"/>
    <property type="match status" value="1"/>
</dbReference>
<dbReference type="HAMAP" id="MF_00022">
    <property type="entry name" value="Glu_tRNA_synth_type1"/>
    <property type="match status" value="1"/>
</dbReference>
<dbReference type="InterPro" id="IPR045462">
    <property type="entry name" value="aa-tRNA-synth_I_cd-bd"/>
</dbReference>
<dbReference type="InterPro" id="IPR020751">
    <property type="entry name" value="aa-tRNA-synth_I_codon-bd_sub2"/>
</dbReference>
<dbReference type="InterPro" id="IPR001412">
    <property type="entry name" value="aa-tRNA-synth_I_CS"/>
</dbReference>
<dbReference type="InterPro" id="IPR008925">
    <property type="entry name" value="aa_tRNA-synth_I_cd-bd_sf"/>
</dbReference>
<dbReference type="InterPro" id="IPR004527">
    <property type="entry name" value="Glu-tRNA-ligase_bac/mito"/>
</dbReference>
<dbReference type="InterPro" id="IPR000924">
    <property type="entry name" value="Glu/Gln-tRNA-synth"/>
</dbReference>
<dbReference type="InterPro" id="IPR020058">
    <property type="entry name" value="Glu/Gln-tRNA-synth_Ib_cat-dom"/>
</dbReference>
<dbReference type="InterPro" id="IPR049940">
    <property type="entry name" value="GluQ/Sye"/>
</dbReference>
<dbReference type="InterPro" id="IPR033910">
    <property type="entry name" value="GluRS_core"/>
</dbReference>
<dbReference type="InterPro" id="IPR014729">
    <property type="entry name" value="Rossmann-like_a/b/a_fold"/>
</dbReference>
<dbReference type="NCBIfam" id="TIGR00464">
    <property type="entry name" value="gltX_bact"/>
    <property type="match status" value="1"/>
</dbReference>
<dbReference type="PANTHER" id="PTHR43311">
    <property type="entry name" value="GLUTAMATE--TRNA LIGASE"/>
    <property type="match status" value="1"/>
</dbReference>
<dbReference type="PANTHER" id="PTHR43311:SF2">
    <property type="entry name" value="GLUTAMATE--TRNA LIGASE, MITOCHONDRIAL-RELATED"/>
    <property type="match status" value="1"/>
</dbReference>
<dbReference type="Pfam" id="PF19269">
    <property type="entry name" value="Anticodon_2"/>
    <property type="match status" value="1"/>
</dbReference>
<dbReference type="Pfam" id="PF00749">
    <property type="entry name" value="tRNA-synt_1c"/>
    <property type="match status" value="1"/>
</dbReference>
<dbReference type="PRINTS" id="PR00987">
    <property type="entry name" value="TRNASYNTHGLU"/>
</dbReference>
<dbReference type="SUPFAM" id="SSF48163">
    <property type="entry name" value="An anticodon-binding domain of class I aminoacyl-tRNA synthetases"/>
    <property type="match status" value="1"/>
</dbReference>
<dbReference type="SUPFAM" id="SSF52374">
    <property type="entry name" value="Nucleotidylyl transferase"/>
    <property type="match status" value="1"/>
</dbReference>
<dbReference type="PROSITE" id="PS00178">
    <property type="entry name" value="AA_TRNA_LIGASE_I"/>
    <property type="match status" value="1"/>
</dbReference>
<gene>
    <name evidence="1" type="primary">gltX2</name>
    <name type="synonym">gltX-2</name>
    <name type="ordered locus">SPO2156</name>
</gene>
<organism>
    <name type="scientific">Ruegeria pomeroyi (strain ATCC 700808 / DSM 15171 / DSS-3)</name>
    <name type="common">Silicibacter pomeroyi</name>
    <dbReference type="NCBI Taxonomy" id="246200"/>
    <lineage>
        <taxon>Bacteria</taxon>
        <taxon>Pseudomonadati</taxon>
        <taxon>Pseudomonadota</taxon>
        <taxon>Alphaproteobacteria</taxon>
        <taxon>Rhodobacterales</taxon>
        <taxon>Roseobacteraceae</taxon>
        <taxon>Ruegeria</taxon>
    </lineage>
</organism>
<comment type="function">
    <text evidence="1">Catalyzes the attachment of glutamate to tRNA(Glu) in a two-step reaction: glutamate is first activated by ATP to form Glu-AMP and then transferred to the acceptor end of tRNA(Glu).</text>
</comment>
<comment type="catalytic activity">
    <reaction evidence="1">
        <text>tRNA(Glu) + L-glutamate + ATP = L-glutamyl-tRNA(Glu) + AMP + diphosphate</text>
        <dbReference type="Rhea" id="RHEA:23540"/>
        <dbReference type="Rhea" id="RHEA-COMP:9663"/>
        <dbReference type="Rhea" id="RHEA-COMP:9680"/>
        <dbReference type="ChEBI" id="CHEBI:29985"/>
        <dbReference type="ChEBI" id="CHEBI:30616"/>
        <dbReference type="ChEBI" id="CHEBI:33019"/>
        <dbReference type="ChEBI" id="CHEBI:78442"/>
        <dbReference type="ChEBI" id="CHEBI:78520"/>
        <dbReference type="ChEBI" id="CHEBI:456215"/>
        <dbReference type="EC" id="6.1.1.17"/>
    </reaction>
</comment>
<comment type="subunit">
    <text evidence="1">Monomer.</text>
</comment>
<comment type="subcellular location">
    <subcellularLocation>
        <location evidence="1">Cytoplasm</location>
    </subcellularLocation>
</comment>
<comment type="similarity">
    <text evidence="1">Belongs to the class-I aminoacyl-tRNA synthetase family. Glutamate--tRNA ligase type 1 subfamily.</text>
</comment>
<accession>Q5LRH2</accession>
<protein>
    <recommendedName>
        <fullName evidence="1">Glutamate--tRNA ligase 2</fullName>
        <ecNumber evidence="1">6.1.1.17</ecNumber>
    </recommendedName>
    <alternativeName>
        <fullName evidence="1">Glutamyl-tRNA synthetase 2</fullName>
        <shortName evidence="1">GluRS 2</shortName>
    </alternativeName>
</protein>
<reference key="1">
    <citation type="journal article" date="2004" name="Nature">
        <title>Genome sequence of Silicibacter pomeroyi reveals adaptations to the marine environment.</title>
        <authorList>
            <person name="Moran M.A."/>
            <person name="Buchan A."/>
            <person name="Gonzalez J.M."/>
            <person name="Heidelberg J.F."/>
            <person name="Whitman W.B."/>
            <person name="Kiene R.P."/>
            <person name="Henriksen J.R."/>
            <person name="King G.M."/>
            <person name="Belas R."/>
            <person name="Fuqua C."/>
            <person name="Brinkac L.M."/>
            <person name="Lewis M."/>
            <person name="Johri S."/>
            <person name="Weaver B."/>
            <person name="Pai G."/>
            <person name="Eisen J.A."/>
            <person name="Rahe E."/>
            <person name="Sheldon W.M."/>
            <person name="Ye W."/>
            <person name="Miller T.R."/>
            <person name="Carlton J."/>
            <person name="Rasko D.A."/>
            <person name="Paulsen I.T."/>
            <person name="Ren Q."/>
            <person name="Daugherty S.C."/>
            <person name="DeBoy R.T."/>
            <person name="Dodson R.J."/>
            <person name="Durkin A.S."/>
            <person name="Madupu R."/>
            <person name="Nelson W.C."/>
            <person name="Sullivan S.A."/>
            <person name="Rosovitz M.J."/>
            <person name="Haft D.H."/>
            <person name="Selengut J."/>
            <person name="Ward N."/>
        </authorList>
    </citation>
    <scope>NUCLEOTIDE SEQUENCE [LARGE SCALE GENOMIC DNA]</scope>
    <source>
        <strain>ATCC 700808 / DSM 15171 / DSS-3</strain>
    </source>
</reference>
<reference key="2">
    <citation type="journal article" date="2014" name="Stand. Genomic Sci.">
        <title>An updated genome annotation for the model marine bacterium Ruegeria pomeroyi DSS-3.</title>
        <authorList>
            <person name="Rivers A.R."/>
            <person name="Smith C.B."/>
            <person name="Moran M.A."/>
        </authorList>
    </citation>
    <scope>GENOME REANNOTATION</scope>
    <source>
        <strain>ATCC 700808 / DSM 15171 / DSS-3</strain>
    </source>
</reference>